<evidence type="ECO:0000255" key="1">
    <source>
        <dbReference type="HAMAP-Rule" id="MF_00151"/>
    </source>
</evidence>
<keyword id="KW-0067">ATP-binding</keyword>
<keyword id="KW-0173">Coenzyme A biosynthesis</keyword>
<keyword id="KW-0963">Cytoplasm</keyword>
<keyword id="KW-0460">Magnesium</keyword>
<keyword id="KW-0547">Nucleotide-binding</keyword>
<keyword id="KW-0548">Nucleotidyltransferase</keyword>
<keyword id="KW-1185">Reference proteome</keyword>
<keyword id="KW-0808">Transferase</keyword>
<sequence length="183" mass="20608">MIAIYPGSFDPITLGHLDLIQRGSRLFERVIVAVLRNPNKTPLFSVQQRLEQIRLSTQHLPNVEVDSFDGLTVNYAQMRHAQVLLRGLRAVSDFEVELQMAHTNKTLSTQIETVFLATSNEYSFLSSSVVREIARFGGSIDHLVPPHIALDIYQCYNHNSPMLNPISTEAIPPLKNISVEREA</sequence>
<feature type="chain" id="PRO_1000096818" description="Phosphopantetheine adenylyltransferase">
    <location>
        <begin position="1"/>
        <end position="183"/>
    </location>
</feature>
<feature type="binding site" evidence="1">
    <location>
        <begin position="8"/>
        <end position="9"/>
    </location>
    <ligand>
        <name>ATP</name>
        <dbReference type="ChEBI" id="CHEBI:30616"/>
    </ligand>
</feature>
<feature type="binding site" evidence="1">
    <location>
        <position position="8"/>
    </location>
    <ligand>
        <name>substrate</name>
    </ligand>
</feature>
<feature type="binding site" evidence="1">
    <location>
        <position position="16"/>
    </location>
    <ligand>
        <name>ATP</name>
        <dbReference type="ChEBI" id="CHEBI:30616"/>
    </ligand>
</feature>
<feature type="binding site" evidence="1">
    <location>
        <position position="40"/>
    </location>
    <ligand>
        <name>substrate</name>
    </ligand>
</feature>
<feature type="binding site" evidence="1">
    <location>
        <position position="72"/>
    </location>
    <ligand>
        <name>substrate</name>
    </ligand>
</feature>
<feature type="binding site" evidence="1">
    <location>
        <position position="86"/>
    </location>
    <ligand>
        <name>substrate</name>
    </ligand>
</feature>
<feature type="binding site" evidence="1">
    <location>
        <begin position="87"/>
        <end position="89"/>
    </location>
    <ligand>
        <name>ATP</name>
        <dbReference type="ChEBI" id="CHEBI:30616"/>
    </ligand>
</feature>
<feature type="binding site" evidence="1">
    <location>
        <position position="97"/>
    </location>
    <ligand>
        <name>ATP</name>
        <dbReference type="ChEBI" id="CHEBI:30616"/>
    </ligand>
</feature>
<feature type="binding site" evidence="1">
    <location>
        <begin position="122"/>
        <end position="128"/>
    </location>
    <ligand>
        <name>ATP</name>
        <dbReference type="ChEBI" id="CHEBI:30616"/>
    </ligand>
</feature>
<feature type="site" description="Transition state stabilizer" evidence="1">
    <location>
        <position position="16"/>
    </location>
</feature>
<protein>
    <recommendedName>
        <fullName evidence="1">Phosphopantetheine adenylyltransferase</fullName>
        <ecNumber evidence="1">2.7.7.3</ecNumber>
    </recommendedName>
    <alternativeName>
        <fullName evidence="1">Dephospho-CoA pyrophosphorylase</fullName>
    </alternativeName>
    <alternativeName>
        <fullName evidence="1">Pantetheine-phosphate adenylyltransferase</fullName>
        <shortName evidence="1">PPAT</shortName>
    </alternativeName>
</protein>
<name>COAD_NOSP7</name>
<dbReference type="EC" id="2.7.7.3" evidence="1"/>
<dbReference type="EMBL" id="CP001037">
    <property type="protein sequence ID" value="ACC82331.1"/>
    <property type="molecule type" value="Genomic_DNA"/>
</dbReference>
<dbReference type="SMR" id="B2J6C6"/>
<dbReference type="STRING" id="63737.Npun_R3950"/>
<dbReference type="EnsemblBacteria" id="ACC82331">
    <property type="protein sequence ID" value="ACC82331"/>
    <property type="gene ID" value="Npun_R3950"/>
</dbReference>
<dbReference type="KEGG" id="npu:Npun_R3950"/>
<dbReference type="eggNOG" id="COG0669">
    <property type="taxonomic scope" value="Bacteria"/>
</dbReference>
<dbReference type="HOGENOM" id="CLU_100149_0_1_3"/>
<dbReference type="OrthoDB" id="9806661at2"/>
<dbReference type="PhylomeDB" id="B2J6C6"/>
<dbReference type="UniPathway" id="UPA00241">
    <property type="reaction ID" value="UER00355"/>
</dbReference>
<dbReference type="Proteomes" id="UP000001191">
    <property type="component" value="Chromosome"/>
</dbReference>
<dbReference type="GO" id="GO:0005737">
    <property type="term" value="C:cytoplasm"/>
    <property type="evidence" value="ECO:0007669"/>
    <property type="project" value="UniProtKB-SubCell"/>
</dbReference>
<dbReference type="GO" id="GO:0005524">
    <property type="term" value="F:ATP binding"/>
    <property type="evidence" value="ECO:0007669"/>
    <property type="project" value="UniProtKB-KW"/>
</dbReference>
<dbReference type="GO" id="GO:0004595">
    <property type="term" value="F:pantetheine-phosphate adenylyltransferase activity"/>
    <property type="evidence" value="ECO:0007669"/>
    <property type="project" value="UniProtKB-UniRule"/>
</dbReference>
<dbReference type="GO" id="GO:0015937">
    <property type="term" value="P:coenzyme A biosynthetic process"/>
    <property type="evidence" value="ECO:0007669"/>
    <property type="project" value="UniProtKB-UniRule"/>
</dbReference>
<dbReference type="CDD" id="cd02163">
    <property type="entry name" value="PPAT"/>
    <property type="match status" value="1"/>
</dbReference>
<dbReference type="Gene3D" id="3.40.50.620">
    <property type="entry name" value="HUPs"/>
    <property type="match status" value="1"/>
</dbReference>
<dbReference type="HAMAP" id="MF_00151">
    <property type="entry name" value="PPAT_bact"/>
    <property type="match status" value="1"/>
</dbReference>
<dbReference type="InterPro" id="IPR004821">
    <property type="entry name" value="Cyt_trans-like"/>
</dbReference>
<dbReference type="InterPro" id="IPR001980">
    <property type="entry name" value="PPAT"/>
</dbReference>
<dbReference type="InterPro" id="IPR014729">
    <property type="entry name" value="Rossmann-like_a/b/a_fold"/>
</dbReference>
<dbReference type="NCBIfam" id="TIGR01510">
    <property type="entry name" value="coaD_prev_kdtB"/>
    <property type="match status" value="1"/>
</dbReference>
<dbReference type="NCBIfam" id="TIGR00125">
    <property type="entry name" value="cyt_tran_rel"/>
    <property type="match status" value="1"/>
</dbReference>
<dbReference type="PANTHER" id="PTHR21342">
    <property type="entry name" value="PHOSPHOPANTETHEINE ADENYLYLTRANSFERASE"/>
    <property type="match status" value="1"/>
</dbReference>
<dbReference type="PANTHER" id="PTHR21342:SF1">
    <property type="entry name" value="PHOSPHOPANTETHEINE ADENYLYLTRANSFERASE"/>
    <property type="match status" value="1"/>
</dbReference>
<dbReference type="Pfam" id="PF01467">
    <property type="entry name" value="CTP_transf_like"/>
    <property type="match status" value="1"/>
</dbReference>
<dbReference type="PRINTS" id="PR01020">
    <property type="entry name" value="LPSBIOSNTHSS"/>
</dbReference>
<dbReference type="SUPFAM" id="SSF52374">
    <property type="entry name" value="Nucleotidylyl transferase"/>
    <property type="match status" value="1"/>
</dbReference>
<accession>B2J6C6</accession>
<organism>
    <name type="scientific">Nostoc punctiforme (strain ATCC 29133 / PCC 73102)</name>
    <dbReference type="NCBI Taxonomy" id="63737"/>
    <lineage>
        <taxon>Bacteria</taxon>
        <taxon>Bacillati</taxon>
        <taxon>Cyanobacteriota</taxon>
        <taxon>Cyanophyceae</taxon>
        <taxon>Nostocales</taxon>
        <taxon>Nostocaceae</taxon>
        <taxon>Nostoc</taxon>
    </lineage>
</organism>
<gene>
    <name evidence="1" type="primary">coaD</name>
    <name type="ordered locus">Npun_R3950</name>
</gene>
<reference key="1">
    <citation type="journal article" date="2013" name="Plant Physiol.">
        <title>A Nostoc punctiforme Sugar Transporter Necessary to Establish a Cyanobacterium-Plant Symbiosis.</title>
        <authorList>
            <person name="Ekman M."/>
            <person name="Picossi S."/>
            <person name="Campbell E.L."/>
            <person name="Meeks J.C."/>
            <person name="Flores E."/>
        </authorList>
    </citation>
    <scope>NUCLEOTIDE SEQUENCE [LARGE SCALE GENOMIC DNA]</scope>
    <source>
        <strain>ATCC 29133 / PCC 73102</strain>
    </source>
</reference>
<comment type="function">
    <text evidence="1">Reversibly transfers an adenylyl group from ATP to 4'-phosphopantetheine, yielding dephospho-CoA (dPCoA) and pyrophosphate.</text>
</comment>
<comment type="catalytic activity">
    <reaction evidence="1">
        <text>(R)-4'-phosphopantetheine + ATP + H(+) = 3'-dephospho-CoA + diphosphate</text>
        <dbReference type="Rhea" id="RHEA:19801"/>
        <dbReference type="ChEBI" id="CHEBI:15378"/>
        <dbReference type="ChEBI" id="CHEBI:30616"/>
        <dbReference type="ChEBI" id="CHEBI:33019"/>
        <dbReference type="ChEBI" id="CHEBI:57328"/>
        <dbReference type="ChEBI" id="CHEBI:61723"/>
        <dbReference type="EC" id="2.7.7.3"/>
    </reaction>
</comment>
<comment type="cofactor">
    <cofactor evidence="1">
        <name>Mg(2+)</name>
        <dbReference type="ChEBI" id="CHEBI:18420"/>
    </cofactor>
</comment>
<comment type="pathway">
    <text evidence="1">Cofactor biosynthesis; coenzyme A biosynthesis; CoA from (R)-pantothenate: step 4/5.</text>
</comment>
<comment type="subunit">
    <text evidence="1">Homohexamer.</text>
</comment>
<comment type="subcellular location">
    <subcellularLocation>
        <location evidence="1">Cytoplasm</location>
    </subcellularLocation>
</comment>
<comment type="similarity">
    <text evidence="1">Belongs to the bacterial CoaD family.</text>
</comment>
<proteinExistence type="inferred from homology"/>